<reference key="1">
    <citation type="journal article" date="2005" name="Science">
        <title>Life at depth: Photobacterium profundum genome sequence and expression analysis.</title>
        <authorList>
            <person name="Vezzi A."/>
            <person name="Campanaro S."/>
            <person name="D'Angelo M."/>
            <person name="Simonato F."/>
            <person name="Vitulo N."/>
            <person name="Lauro F.M."/>
            <person name="Cestaro A."/>
            <person name="Malacrida G."/>
            <person name="Simionati B."/>
            <person name="Cannata N."/>
            <person name="Romualdi C."/>
            <person name="Bartlett D.H."/>
            <person name="Valle G."/>
        </authorList>
    </citation>
    <scope>NUCLEOTIDE SEQUENCE [LARGE SCALE GENOMIC DNA]</scope>
    <source>
        <strain>ATCC BAA-1253 / SS9</strain>
    </source>
</reference>
<name>Y2144_PHOPR</name>
<evidence type="ECO:0000255" key="1">
    <source>
        <dbReference type="HAMAP-Rule" id="MF_01016"/>
    </source>
</evidence>
<protein>
    <recommendedName>
        <fullName evidence="1">Putative transport protein PBPRA2144</fullName>
    </recommendedName>
</protein>
<proteinExistence type="inferred from homology"/>
<sequence length="552" mass="58735">MSDIALSISILALVAVLGLWIGNWRICGVGLGIGGVLFGGIFVGHFTDSWGVALDSHTLHFIQEFGLILFVYTIGIQVGPGFFASLRSSGLKLNAFAALVVLLGCIVAIGLYKIFDVPLPVILGIFSGAVTNTPSLGAGQQILTELGAQEGMLDLTGMGYAVAYPFGICGILLTMWILRLAFRVNVDKEAEEFEVQNGHKKQNLHTLNVAIRNPNLNGLQLKDVPALAEGDIVCSRLKRGEKLHVPRPDTRIETNDLLHLVGAKHALEKARLVIGEVVDASLSTRGTDLRVQRLVVTNEIVLGKKISHLDLKEKYDVVVSRLNRAGVELVPTSQTTLQFGDILNLVGRQEAIESVSGIVGNAHQKLQQVQMLPVFVGIGLGVLLGSIPFYLPGFPAAIKLGLAGGPLLVALILARIGSIGKLYWFMPPSANLALREIGIVLFLAVVGLKSGGGFVDTLVNGDGLSWMGYGIVITLVPLLTVGFLARIVGQLNYLTICGMLAGSMTDPPALAFANGLHPTSGASALSYATVYPLVMCLRILSPQILALLLWAV</sequence>
<keyword id="KW-1003">Cell membrane</keyword>
<keyword id="KW-0472">Membrane</keyword>
<keyword id="KW-1185">Reference proteome</keyword>
<keyword id="KW-0677">Repeat</keyword>
<keyword id="KW-0812">Transmembrane</keyword>
<keyword id="KW-1133">Transmembrane helix</keyword>
<keyword id="KW-0813">Transport</keyword>
<gene>
    <name type="ordered locus">PBPRA2144</name>
</gene>
<accession>Q6LQ84</accession>
<feature type="chain" id="PRO_0000208803" description="Putative transport protein PBPRA2144">
    <location>
        <begin position="1"/>
        <end position="552"/>
    </location>
</feature>
<feature type="transmembrane region" description="Helical" evidence="1">
    <location>
        <begin position="4"/>
        <end position="24"/>
    </location>
</feature>
<feature type="transmembrane region" description="Helical" evidence="1">
    <location>
        <begin position="26"/>
        <end position="46"/>
    </location>
</feature>
<feature type="transmembrane region" description="Helical" evidence="1">
    <location>
        <begin position="65"/>
        <end position="85"/>
    </location>
</feature>
<feature type="transmembrane region" description="Helical" evidence="1">
    <location>
        <begin position="95"/>
        <end position="115"/>
    </location>
</feature>
<feature type="transmembrane region" description="Helical" evidence="1">
    <location>
        <begin position="158"/>
        <end position="178"/>
    </location>
</feature>
<feature type="transmembrane region" description="Helical" evidence="1">
    <location>
        <begin position="371"/>
        <end position="391"/>
    </location>
</feature>
<feature type="transmembrane region" description="Helical" evidence="1">
    <location>
        <begin position="394"/>
        <end position="414"/>
    </location>
</feature>
<feature type="transmembrane region" description="Helical" evidence="1">
    <location>
        <begin position="439"/>
        <end position="459"/>
    </location>
</feature>
<feature type="transmembrane region" description="Helical" evidence="1">
    <location>
        <begin position="464"/>
        <end position="484"/>
    </location>
</feature>
<feature type="transmembrane region" description="Helical" evidence="1">
    <location>
        <begin position="493"/>
        <end position="513"/>
    </location>
</feature>
<feature type="transmembrane region" description="Helical" evidence="1">
    <location>
        <begin position="532"/>
        <end position="552"/>
    </location>
</feature>
<feature type="domain" description="RCK C-terminal 1" evidence="1">
    <location>
        <begin position="188"/>
        <end position="276"/>
    </location>
</feature>
<feature type="domain" description="RCK C-terminal 2" evidence="1">
    <location>
        <begin position="279"/>
        <end position="361"/>
    </location>
</feature>
<dbReference type="EMBL" id="CR378670">
    <property type="protein sequence ID" value="CAG20542.1"/>
    <property type="molecule type" value="Genomic_DNA"/>
</dbReference>
<dbReference type="RefSeq" id="WP_011218834.1">
    <property type="nucleotide sequence ID" value="NC_006370.1"/>
</dbReference>
<dbReference type="SMR" id="Q6LQ84"/>
<dbReference type="STRING" id="298386.PBPRA2144"/>
<dbReference type="KEGG" id="ppr:PBPRA2144"/>
<dbReference type="eggNOG" id="COG2985">
    <property type="taxonomic scope" value="Bacteria"/>
</dbReference>
<dbReference type="HOGENOM" id="CLU_035023_3_1_6"/>
<dbReference type="Proteomes" id="UP000000593">
    <property type="component" value="Chromosome 1"/>
</dbReference>
<dbReference type="GO" id="GO:0005886">
    <property type="term" value="C:plasma membrane"/>
    <property type="evidence" value="ECO:0007669"/>
    <property type="project" value="UniProtKB-SubCell"/>
</dbReference>
<dbReference type="GO" id="GO:0008324">
    <property type="term" value="F:monoatomic cation transmembrane transporter activity"/>
    <property type="evidence" value="ECO:0007669"/>
    <property type="project" value="InterPro"/>
</dbReference>
<dbReference type="GO" id="GO:0006813">
    <property type="term" value="P:potassium ion transport"/>
    <property type="evidence" value="ECO:0007669"/>
    <property type="project" value="InterPro"/>
</dbReference>
<dbReference type="Gene3D" id="3.30.70.1450">
    <property type="entry name" value="Regulator of K+ conductance, C-terminal domain"/>
    <property type="match status" value="2"/>
</dbReference>
<dbReference type="HAMAP" id="MF_01016">
    <property type="entry name" value="YidE"/>
    <property type="match status" value="1"/>
</dbReference>
<dbReference type="InterPro" id="IPR050144">
    <property type="entry name" value="AAE_transporter"/>
</dbReference>
<dbReference type="InterPro" id="IPR006037">
    <property type="entry name" value="RCK_C"/>
</dbReference>
<dbReference type="InterPro" id="IPR036721">
    <property type="entry name" value="RCK_C_sf"/>
</dbReference>
<dbReference type="InterPro" id="IPR023018">
    <property type="entry name" value="Transpt_YidE_put"/>
</dbReference>
<dbReference type="InterPro" id="IPR006512">
    <property type="entry name" value="YidE_YbjL"/>
</dbReference>
<dbReference type="NCBIfam" id="NF003007">
    <property type="entry name" value="PRK03818.1"/>
    <property type="match status" value="1"/>
</dbReference>
<dbReference type="NCBIfam" id="TIGR01625">
    <property type="entry name" value="YidE_YbjL_dupl"/>
    <property type="match status" value="2"/>
</dbReference>
<dbReference type="PANTHER" id="PTHR30445">
    <property type="entry name" value="K(+)_H(+) ANTIPORTER SUBUNIT KHTT"/>
    <property type="match status" value="1"/>
</dbReference>
<dbReference type="PANTHER" id="PTHR30445:SF3">
    <property type="entry name" value="TRANSPORT PROTEIN YIDE-RELATED"/>
    <property type="match status" value="1"/>
</dbReference>
<dbReference type="Pfam" id="PF06826">
    <property type="entry name" value="Asp-Al_Ex"/>
    <property type="match status" value="2"/>
</dbReference>
<dbReference type="Pfam" id="PF02080">
    <property type="entry name" value="TrkA_C"/>
    <property type="match status" value="2"/>
</dbReference>
<dbReference type="SUPFAM" id="SSF116726">
    <property type="entry name" value="TrkA C-terminal domain-like"/>
    <property type="match status" value="2"/>
</dbReference>
<dbReference type="PROSITE" id="PS51202">
    <property type="entry name" value="RCK_C"/>
    <property type="match status" value="2"/>
</dbReference>
<organism>
    <name type="scientific">Photobacterium profundum (strain SS9)</name>
    <dbReference type="NCBI Taxonomy" id="298386"/>
    <lineage>
        <taxon>Bacteria</taxon>
        <taxon>Pseudomonadati</taxon>
        <taxon>Pseudomonadota</taxon>
        <taxon>Gammaproteobacteria</taxon>
        <taxon>Vibrionales</taxon>
        <taxon>Vibrionaceae</taxon>
        <taxon>Photobacterium</taxon>
    </lineage>
</organism>
<comment type="subcellular location">
    <subcellularLocation>
        <location evidence="1">Cell membrane</location>
        <topology evidence="1">Multi-pass membrane protein</topology>
    </subcellularLocation>
</comment>
<comment type="similarity">
    <text evidence="1">Belongs to the AAE transporter (TC 2.A.81) family. YidE subfamily.</text>
</comment>